<evidence type="ECO:0000255" key="1">
    <source>
        <dbReference type="HAMAP-Rule" id="MF_00006"/>
    </source>
</evidence>
<evidence type="ECO:0000256" key="2">
    <source>
        <dbReference type="SAM" id="MobiDB-lite"/>
    </source>
</evidence>
<proteinExistence type="inferred from homology"/>
<feature type="chain" id="PRO_0000240783" description="Argininosuccinate lyase">
    <location>
        <begin position="1"/>
        <end position="489"/>
    </location>
</feature>
<feature type="region of interest" description="Disordered" evidence="2">
    <location>
        <begin position="462"/>
        <end position="489"/>
    </location>
</feature>
<dbReference type="EC" id="4.3.2.1" evidence="1"/>
<dbReference type="EMBL" id="CP000239">
    <property type="protein sequence ID" value="ABC98333.1"/>
    <property type="molecule type" value="Genomic_DNA"/>
</dbReference>
<dbReference type="RefSeq" id="WP_011429025.1">
    <property type="nucleotide sequence ID" value="NC_007775.1"/>
</dbReference>
<dbReference type="SMR" id="Q2JXY9"/>
<dbReference type="STRING" id="321327.CYA_0103"/>
<dbReference type="KEGG" id="cya:CYA_0103"/>
<dbReference type="eggNOG" id="COG0165">
    <property type="taxonomic scope" value="Bacteria"/>
</dbReference>
<dbReference type="HOGENOM" id="CLU_027272_2_3_3"/>
<dbReference type="OrthoDB" id="9769623at2"/>
<dbReference type="UniPathway" id="UPA00068">
    <property type="reaction ID" value="UER00114"/>
</dbReference>
<dbReference type="Proteomes" id="UP000008818">
    <property type="component" value="Chromosome"/>
</dbReference>
<dbReference type="GO" id="GO:0005829">
    <property type="term" value="C:cytosol"/>
    <property type="evidence" value="ECO:0007669"/>
    <property type="project" value="TreeGrafter"/>
</dbReference>
<dbReference type="GO" id="GO:0004056">
    <property type="term" value="F:argininosuccinate lyase activity"/>
    <property type="evidence" value="ECO:0007669"/>
    <property type="project" value="UniProtKB-UniRule"/>
</dbReference>
<dbReference type="GO" id="GO:0042450">
    <property type="term" value="P:arginine biosynthetic process via ornithine"/>
    <property type="evidence" value="ECO:0007669"/>
    <property type="project" value="InterPro"/>
</dbReference>
<dbReference type="GO" id="GO:0006526">
    <property type="term" value="P:L-arginine biosynthetic process"/>
    <property type="evidence" value="ECO:0007669"/>
    <property type="project" value="UniProtKB-UniRule"/>
</dbReference>
<dbReference type="CDD" id="cd01359">
    <property type="entry name" value="Argininosuccinate_lyase"/>
    <property type="match status" value="1"/>
</dbReference>
<dbReference type="FunFam" id="1.10.275.10:FF:000002">
    <property type="entry name" value="Argininosuccinate lyase"/>
    <property type="match status" value="1"/>
</dbReference>
<dbReference type="FunFam" id="1.10.40.30:FF:000001">
    <property type="entry name" value="Argininosuccinate lyase"/>
    <property type="match status" value="1"/>
</dbReference>
<dbReference type="FunFam" id="1.20.200.10:FF:000015">
    <property type="entry name" value="argininosuccinate lyase isoform X2"/>
    <property type="match status" value="1"/>
</dbReference>
<dbReference type="Gene3D" id="1.10.40.30">
    <property type="entry name" value="Fumarase/aspartase (C-terminal domain)"/>
    <property type="match status" value="1"/>
</dbReference>
<dbReference type="Gene3D" id="1.20.200.10">
    <property type="entry name" value="Fumarase/aspartase (Central domain)"/>
    <property type="match status" value="1"/>
</dbReference>
<dbReference type="Gene3D" id="1.10.275.10">
    <property type="entry name" value="Fumarase/aspartase (N-terminal domain)"/>
    <property type="match status" value="1"/>
</dbReference>
<dbReference type="HAMAP" id="MF_00006">
    <property type="entry name" value="Arg_succ_lyase"/>
    <property type="match status" value="1"/>
</dbReference>
<dbReference type="InterPro" id="IPR029419">
    <property type="entry name" value="Arg_succ_lyase_C"/>
</dbReference>
<dbReference type="InterPro" id="IPR009049">
    <property type="entry name" value="Argininosuccinate_lyase"/>
</dbReference>
<dbReference type="InterPro" id="IPR024083">
    <property type="entry name" value="Fumarase/histidase_N"/>
</dbReference>
<dbReference type="InterPro" id="IPR020557">
    <property type="entry name" value="Fumarate_lyase_CS"/>
</dbReference>
<dbReference type="InterPro" id="IPR000362">
    <property type="entry name" value="Fumarate_lyase_fam"/>
</dbReference>
<dbReference type="InterPro" id="IPR022761">
    <property type="entry name" value="Fumarate_lyase_N"/>
</dbReference>
<dbReference type="InterPro" id="IPR008948">
    <property type="entry name" value="L-Aspartase-like"/>
</dbReference>
<dbReference type="NCBIfam" id="TIGR00838">
    <property type="entry name" value="argH"/>
    <property type="match status" value="1"/>
</dbReference>
<dbReference type="PANTHER" id="PTHR43814">
    <property type="entry name" value="ARGININOSUCCINATE LYASE"/>
    <property type="match status" value="1"/>
</dbReference>
<dbReference type="PANTHER" id="PTHR43814:SF1">
    <property type="entry name" value="ARGININOSUCCINATE LYASE"/>
    <property type="match status" value="1"/>
</dbReference>
<dbReference type="Pfam" id="PF14698">
    <property type="entry name" value="ASL_C2"/>
    <property type="match status" value="1"/>
</dbReference>
<dbReference type="Pfam" id="PF00206">
    <property type="entry name" value="Lyase_1"/>
    <property type="match status" value="1"/>
</dbReference>
<dbReference type="PRINTS" id="PR00145">
    <property type="entry name" value="ARGSUCLYASE"/>
</dbReference>
<dbReference type="PRINTS" id="PR00149">
    <property type="entry name" value="FUMRATELYASE"/>
</dbReference>
<dbReference type="SUPFAM" id="SSF48557">
    <property type="entry name" value="L-aspartase-like"/>
    <property type="match status" value="1"/>
</dbReference>
<dbReference type="PROSITE" id="PS00163">
    <property type="entry name" value="FUMARATE_LYASES"/>
    <property type="match status" value="1"/>
</dbReference>
<comment type="catalytic activity">
    <reaction evidence="1">
        <text>2-(N(omega)-L-arginino)succinate = fumarate + L-arginine</text>
        <dbReference type="Rhea" id="RHEA:24020"/>
        <dbReference type="ChEBI" id="CHEBI:29806"/>
        <dbReference type="ChEBI" id="CHEBI:32682"/>
        <dbReference type="ChEBI" id="CHEBI:57472"/>
        <dbReference type="EC" id="4.3.2.1"/>
    </reaction>
</comment>
<comment type="pathway">
    <text evidence="1">Amino-acid biosynthesis; L-arginine biosynthesis; L-arginine from L-ornithine and carbamoyl phosphate: step 3/3.</text>
</comment>
<comment type="subcellular location">
    <subcellularLocation>
        <location evidence="1">Cytoplasm</location>
    </subcellularLocation>
</comment>
<comment type="similarity">
    <text evidence="1">Belongs to the lyase 1 family. Argininosuccinate lyase subfamily.</text>
</comment>
<reference key="1">
    <citation type="journal article" date="2007" name="ISME J.">
        <title>Population level functional diversity in a microbial community revealed by comparative genomic and metagenomic analyses.</title>
        <authorList>
            <person name="Bhaya D."/>
            <person name="Grossman A.R."/>
            <person name="Steunou A.-S."/>
            <person name="Khuri N."/>
            <person name="Cohan F.M."/>
            <person name="Hamamura N."/>
            <person name="Melendrez M.C."/>
            <person name="Bateson M.M."/>
            <person name="Ward D.M."/>
            <person name="Heidelberg J.F."/>
        </authorList>
    </citation>
    <scope>NUCLEOTIDE SEQUENCE [LARGE SCALE GENOMIC DNA]</scope>
    <source>
        <strain>JA-3-3Ab</strain>
    </source>
</reference>
<keyword id="KW-0028">Amino-acid biosynthesis</keyword>
<keyword id="KW-0055">Arginine biosynthesis</keyword>
<keyword id="KW-0963">Cytoplasm</keyword>
<keyword id="KW-0456">Lyase</keyword>
<accession>Q2JXY9</accession>
<name>ARLY_SYNJA</name>
<gene>
    <name evidence="1" type="primary">argH</name>
    <name type="ordered locus">CYA_0103</name>
</gene>
<organism>
    <name type="scientific">Synechococcus sp. (strain JA-3-3Ab)</name>
    <name type="common">Cyanobacteria bacterium Yellowstone A-Prime</name>
    <dbReference type="NCBI Taxonomy" id="321327"/>
    <lineage>
        <taxon>Bacteria</taxon>
        <taxon>Bacillati</taxon>
        <taxon>Cyanobacteriota</taxon>
        <taxon>Cyanophyceae</taxon>
        <taxon>Synechococcales</taxon>
        <taxon>Synechococcaceae</taxon>
        <taxon>Synechococcus</taxon>
    </lineage>
</organism>
<protein>
    <recommendedName>
        <fullName evidence="1">Argininosuccinate lyase</fullName>
        <shortName evidence="1">ASAL</shortName>
        <ecNumber evidence="1">4.3.2.1</ecNumber>
    </recommendedName>
    <alternativeName>
        <fullName evidence="1">Arginosuccinase</fullName>
    </alternativeName>
</protein>
<sequence length="489" mass="54168">MAKPTAPSTPRPWSGRFAGSLHPRIARFNASIGFDIRLLPYDVAGSLAHVQMLGACGILSREEAEQIRQGLEQIEKEVAEGIFQPDPEAEDVHYAVERRLVALVGEVGKKLHTGRSRNDQVATDLRLYLRDEIDTIRQALWELRGVLLDLASQHVETILPGYTHLQRAQPISLAHHLLAYEEMLWRDWQRLGRVREEVNVCPLGSGALAGTSLPIDRQLVAHLLGFERISANSLDAVSDRDYLVEFHAAASLILVHLSRLSEELILWATQEFGFVALTDACATGSSLMPQKKNPDVLELVRGKTGRVFGHLQALLVTLKGLPLAYNKDLQEDKEGLFDTVDTVKACLEAMTILLREGIQFQTQRMEAAVQEDFSNATDVADYLVRKGIPFRAAHDLVGQIVRTCVAEGILLKDLPLERWKSFHRAFEEDIFAAIDPRQVVAARLSAGGTGFAVVREALQRAQARYQQTEPAEEPPLPPSSPGSGLPLES</sequence>